<accession>Q8H991</accession>
<accession>Q8H990</accession>
<name>HAZ1_ORYSJ</name>
<keyword id="KW-0238">DNA-binding</keyword>
<keyword id="KW-0939">Gibberellin signaling pathway</keyword>
<keyword id="KW-0371">Homeobox</keyword>
<keyword id="KW-0479">Metal-binding</keyword>
<keyword id="KW-0539">Nucleus</keyword>
<keyword id="KW-1185">Reference proteome</keyword>
<keyword id="KW-0678">Repressor</keyword>
<keyword id="KW-0804">Transcription</keyword>
<keyword id="KW-0805">Transcription regulation</keyword>
<keyword id="KW-0862">Zinc</keyword>
<keyword id="KW-0863">Zinc-finger</keyword>
<gene>
    <name evidence="6" type="primary">HAZ1</name>
    <name evidence="7" type="synonym">HOX1A</name>
    <name evidence="10" type="ordered locus">Os06g0229300</name>
    <name evidence="8" type="ordered locus">LOC_Os06g12400</name>
    <name evidence="9" type="ORF">P0525F01.18</name>
</gene>
<proteinExistence type="evidence at transcript level"/>
<organism>
    <name type="scientific">Oryza sativa subsp. japonica</name>
    <name type="common">Rice</name>
    <dbReference type="NCBI Taxonomy" id="39947"/>
    <lineage>
        <taxon>Eukaryota</taxon>
        <taxon>Viridiplantae</taxon>
        <taxon>Streptophyta</taxon>
        <taxon>Embryophyta</taxon>
        <taxon>Tracheophyta</taxon>
        <taxon>Spermatophyta</taxon>
        <taxon>Magnoliopsida</taxon>
        <taxon>Liliopsida</taxon>
        <taxon>Poales</taxon>
        <taxon>Poaceae</taxon>
        <taxon>BOP clade</taxon>
        <taxon>Oryzoideae</taxon>
        <taxon>Oryzeae</taxon>
        <taxon>Oryzinae</taxon>
        <taxon>Oryza</taxon>
        <taxon>Oryza sativa</taxon>
    </lineage>
</organism>
<evidence type="ECO:0000255" key="1">
    <source>
        <dbReference type="PROSITE-ProRule" id="PRU00108"/>
    </source>
</evidence>
<evidence type="ECO:0000255" key="2">
    <source>
        <dbReference type="PROSITE-ProRule" id="PRU00146"/>
    </source>
</evidence>
<evidence type="ECO:0000256" key="3">
    <source>
        <dbReference type="SAM" id="MobiDB-lite"/>
    </source>
</evidence>
<evidence type="ECO:0000269" key="4">
    <source>
    </source>
</evidence>
<evidence type="ECO:0000269" key="5">
    <source>
    </source>
</evidence>
<evidence type="ECO:0000303" key="6">
    <source>
    </source>
</evidence>
<evidence type="ECO:0000303" key="7">
    <source>
    </source>
</evidence>
<evidence type="ECO:0000305" key="8"/>
<evidence type="ECO:0000312" key="9">
    <source>
        <dbReference type="EMBL" id="BAD37267.1"/>
    </source>
</evidence>
<evidence type="ECO:0000312" key="10">
    <source>
        <dbReference type="EMBL" id="BAF19128.1"/>
    </source>
</evidence>
<dbReference type="EMBL" id="AB081340">
    <property type="protein sequence ID" value="BAC15621.1"/>
    <property type="molecule type" value="mRNA"/>
</dbReference>
<dbReference type="EMBL" id="AB081341">
    <property type="protein sequence ID" value="BAC15622.1"/>
    <property type="molecule type" value="Genomic_DNA"/>
</dbReference>
<dbReference type="EMBL" id="FJ940197">
    <property type="protein sequence ID" value="ADB84619.1"/>
    <property type="molecule type" value="mRNA"/>
</dbReference>
<dbReference type="EMBL" id="AP003509">
    <property type="protein sequence ID" value="BAD37267.1"/>
    <property type="molecule type" value="Genomic_DNA"/>
</dbReference>
<dbReference type="EMBL" id="AP008212">
    <property type="protein sequence ID" value="BAF19128.1"/>
    <property type="molecule type" value="Genomic_DNA"/>
</dbReference>
<dbReference type="EMBL" id="AP014962">
    <property type="protein sequence ID" value="BAS96897.1"/>
    <property type="molecule type" value="Genomic_DNA"/>
</dbReference>
<dbReference type="EMBL" id="AK121314">
    <property type="protein sequence ID" value="BAH00425.1"/>
    <property type="molecule type" value="mRNA"/>
</dbReference>
<dbReference type="RefSeq" id="XP_015644127.1">
    <property type="nucleotide sequence ID" value="XM_015788641.1"/>
</dbReference>
<dbReference type="SMR" id="Q8H991"/>
<dbReference type="FunCoup" id="Q8H991">
    <property type="interactions" value="1178"/>
</dbReference>
<dbReference type="STRING" id="39947.Q8H991"/>
<dbReference type="PaxDb" id="39947-Q8H991"/>
<dbReference type="EnsemblPlants" id="Os06t0229300-01">
    <property type="protein sequence ID" value="Os06t0229300-01"/>
    <property type="gene ID" value="Os06g0229300"/>
</dbReference>
<dbReference type="Gramene" id="Os06t0229300-01">
    <property type="protein sequence ID" value="Os06t0229300-01"/>
    <property type="gene ID" value="Os06g0229300"/>
</dbReference>
<dbReference type="KEGG" id="dosa:Os06g0229300"/>
<dbReference type="eggNOG" id="KOG4299">
    <property type="taxonomic scope" value="Eukaryota"/>
</dbReference>
<dbReference type="HOGENOM" id="CLU_011923_0_0_1"/>
<dbReference type="InParanoid" id="Q8H991"/>
<dbReference type="OMA" id="HFGPAIN"/>
<dbReference type="OrthoDB" id="1903104at2759"/>
<dbReference type="PlantReactome" id="R-OSA-9631623">
    <property type="pathway name" value="Regulation of embryo development"/>
</dbReference>
<dbReference type="Proteomes" id="UP000000763">
    <property type="component" value="Chromosome 6"/>
</dbReference>
<dbReference type="Proteomes" id="UP000059680">
    <property type="component" value="Chromosome 6"/>
</dbReference>
<dbReference type="GO" id="GO:0005634">
    <property type="term" value="C:nucleus"/>
    <property type="evidence" value="ECO:0000314"/>
    <property type="project" value="UniProtKB"/>
</dbReference>
<dbReference type="GO" id="GO:0003682">
    <property type="term" value="F:chromatin binding"/>
    <property type="evidence" value="ECO:0000318"/>
    <property type="project" value="GO_Central"/>
</dbReference>
<dbReference type="GO" id="GO:0003677">
    <property type="term" value="F:DNA binding"/>
    <property type="evidence" value="ECO:0000318"/>
    <property type="project" value="GO_Central"/>
</dbReference>
<dbReference type="GO" id="GO:0001217">
    <property type="term" value="F:DNA-binding transcription repressor activity"/>
    <property type="evidence" value="ECO:0000314"/>
    <property type="project" value="GO_Central"/>
</dbReference>
<dbReference type="GO" id="GO:0008270">
    <property type="term" value="F:zinc ion binding"/>
    <property type="evidence" value="ECO:0007669"/>
    <property type="project" value="UniProtKB-KW"/>
</dbReference>
<dbReference type="GO" id="GO:0009740">
    <property type="term" value="P:gibberellic acid mediated signaling pathway"/>
    <property type="evidence" value="ECO:0007669"/>
    <property type="project" value="UniProtKB-KW"/>
</dbReference>
<dbReference type="GO" id="GO:0045814">
    <property type="term" value="P:negative regulation of gene expression, epigenetic"/>
    <property type="evidence" value="ECO:0000318"/>
    <property type="project" value="GO_Central"/>
</dbReference>
<dbReference type="GO" id="GO:0000122">
    <property type="term" value="P:negative regulation of transcription by RNA polymerase II"/>
    <property type="evidence" value="ECO:0000314"/>
    <property type="project" value="GO_Central"/>
</dbReference>
<dbReference type="GO" id="GO:0009939">
    <property type="term" value="P:positive regulation of gibberellic acid mediated signaling pathway"/>
    <property type="evidence" value="ECO:0000315"/>
    <property type="project" value="UniProtKB"/>
</dbReference>
<dbReference type="CDD" id="cd00086">
    <property type="entry name" value="homeodomain"/>
    <property type="match status" value="1"/>
</dbReference>
<dbReference type="CDD" id="cd15504">
    <property type="entry name" value="PHD_PRHA_like"/>
    <property type="match status" value="1"/>
</dbReference>
<dbReference type="FunFam" id="1.10.10.60:FF:000263">
    <property type="entry name" value="Putative homeodomain-like transcription factor superfamily protein"/>
    <property type="match status" value="1"/>
</dbReference>
<dbReference type="FunFam" id="3.30.40.10:FF:000433">
    <property type="entry name" value="Putative homeodomain-like transcription factor superfamily protein"/>
    <property type="match status" value="1"/>
</dbReference>
<dbReference type="Gene3D" id="1.10.10.60">
    <property type="entry name" value="Homeodomain-like"/>
    <property type="match status" value="1"/>
</dbReference>
<dbReference type="Gene3D" id="3.30.40.10">
    <property type="entry name" value="Zinc/RING finger domain, C3HC4 (zinc finger)"/>
    <property type="match status" value="1"/>
</dbReference>
<dbReference type="InterPro" id="IPR001356">
    <property type="entry name" value="HD"/>
</dbReference>
<dbReference type="InterPro" id="IPR009057">
    <property type="entry name" value="Homeodomain-like_sf"/>
</dbReference>
<dbReference type="InterPro" id="IPR045876">
    <property type="entry name" value="PRHA-like_PHD-finger"/>
</dbReference>
<dbReference type="InterPro" id="IPR019786">
    <property type="entry name" value="Zinc_finger_PHD-type_CS"/>
</dbReference>
<dbReference type="InterPro" id="IPR011011">
    <property type="entry name" value="Znf_FYVE_PHD"/>
</dbReference>
<dbReference type="InterPro" id="IPR001965">
    <property type="entry name" value="Znf_PHD"/>
</dbReference>
<dbReference type="InterPro" id="IPR019787">
    <property type="entry name" value="Znf_PHD-finger"/>
</dbReference>
<dbReference type="InterPro" id="IPR013083">
    <property type="entry name" value="Znf_RING/FYVE/PHD"/>
</dbReference>
<dbReference type="PANTHER" id="PTHR12628:SF13">
    <property type="entry name" value="HOMEOBOX PROTEIN HAT3.1"/>
    <property type="match status" value="1"/>
</dbReference>
<dbReference type="PANTHER" id="PTHR12628">
    <property type="entry name" value="POLYCOMB-LIKE TRANSCRIPTION FACTOR"/>
    <property type="match status" value="1"/>
</dbReference>
<dbReference type="Pfam" id="PF00046">
    <property type="entry name" value="Homeodomain"/>
    <property type="match status" value="1"/>
</dbReference>
<dbReference type="Pfam" id="PF00628">
    <property type="entry name" value="PHD"/>
    <property type="match status" value="1"/>
</dbReference>
<dbReference type="SMART" id="SM00389">
    <property type="entry name" value="HOX"/>
    <property type="match status" value="1"/>
</dbReference>
<dbReference type="SMART" id="SM00249">
    <property type="entry name" value="PHD"/>
    <property type="match status" value="1"/>
</dbReference>
<dbReference type="SUPFAM" id="SSF57903">
    <property type="entry name" value="FYVE/PHD zinc finger"/>
    <property type="match status" value="1"/>
</dbReference>
<dbReference type="SUPFAM" id="SSF46689">
    <property type="entry name" value="Homeodomain-like"/>
    <property type="match status" value="1"/>
</dbReference>
<dbReference type="PROSITE" id="PS50071">
    <property type="entry name" value="HOMEOBOX_2"/>
    <property type="match status" value="1"/>
</dbReference>
<dbReference type="PROSITE" id="PS01359">
    <property type="entry name" value="ZF_PHD_1"/>
    <property type="match status" value="1"/>
</dbReference>
<dbReference type="PROSITE" id="PS50016">
    <property type="entry name" value="ZF_PHD_2"/>
    <property type="match status" value="1"/>
</dbReference>
<reference key="1">
    <citation type="journal article" date="2004" name="Gene">
        <title>Radial axis differentiation in a globular embryo is marked by HAZ1, a PHD-finger homeobox gene of rice.</title>
        <authorList>
            <person name="Ito Y."/>
            <person name="Chujo A."/>
            <person name="Eiguchi M."/>
            <person name="Kurata N."/>
        </authorList>
    </citation>
    <scope>NUCLEOTIDE SEQUENCE [GENOMIC DNA / MRNA]</scope>
    <scope>DEVELOPMENTAL STAGE</scope>
    <source>
        <strain>cv. Nipponbare</strain>
    </source>
</reference>
<reference key="2">
    <citation type="submission" date="2009-04" db="EMBL/GenBank/DDBJ databases">
        <title>Oryza sativa japonica group clone KCS150D11 PHD-finger family homeodomain protein mRNA.</title>
        <authorList>
            <person name="Yoon U.H."/>
            <person name="Lee G.S."/>
            <person name="Lee J.S."/>
            <person name="Hahn J.H."/>
            <person name="Kim C.K."/>
            <person name="Lee J.H."/>
            <person name="Kim Y.H."/>
        </authorList>
    </citation>
    <scope>NUCLEOTIDE SEQUENCE [MRNA]</scope>
    <source>
        <strain>cv. Ilpoombyeo</strain>
    </source>
</reference>
<reference key="3">
    <citation type="journal article" date="2005" name="Nature">
        <title>The map-based sequence of the rice genome.</title>
        <authorList>
            <consortium name="International rice genome sequencing project (IRGSP)"/>
        </authorList>
    </citation>
    <scope>NUCLEOTIDE SEQUENCE [LARGE SCALE GENOMIC DNA]</scope>
    <source>
        <strain>cv. Nipponbare</strain>
    </source>
</reference>
<reference key="4">
    <citation type="journal article" date="2008" name="Nucleic Acids Res.">
        <title>The rice annotation project database (RAP-DB): 2008 update.</title>
        <authorList>
            <consortium name="The rice annotation project (RAP)"/>
        </authorList>
    </citation>
    <scope>GENOME REANNOTATION</scope>
    <source>
        <strain>cv. Nipponbare</strain>
    </source>
</reference>
<reference key="5">
    <citation type="journal article" date="2013" name="Rice">
        <title>Improvement of the Oryza sativa Nipponbare reference genome using next generation sequence and optical map data.</title>
        <authorList>
            <person name="Kawahara Y."/>
            <person name="de la Bastide M."/>
            <person name="Hamilton J.P."/>
            <person name="Kanamori H."/>
            <person name="McCombie W.R."/>
            <person name="Ouyang S."/>
            <person name="Schwartz D.C."/>
            <person name="Tanaka T."/>
            <person name="Wu J."/>
            <person name="Zhou S."/>
            <person name="Childs K.L."/>
            <person name="Davidson R.M."/>
            <person name="Lin H."/>
            <person name="Quesada-Ocampo L."/>
            <person name="Vaillancourt B."/>
            <person name="Sakai H."/>
            <person name="Lee S.S."/>
            <person name="Kim J."/>
            <person name="Numa H."/>
            <person name="Itoh T."/>
            <person name="Buell C.R."/>
            <person name="Matsumoto T."/>
        </authorList>
    </citation>
    <scope>GENOME REANNOTATION</scope>
    <source>
        <strain>cv. Nipponbare</strain>
    </source>
</reference>
<reference key="6">
    <citation type="journal article" date="2003" name="Science">
        <title>Collection, mapping, and annotation of over 28,000 cDNA clones from japonica rice.</title>
        <authorList>
            <consortium name="The rice full-length cDNA consortium"/>
        </authorList>
    </citation>
    <scope>NUCLEOTIDE SEQUENCE [LARGE SCALE MRNA]</scope>
    <source>
        <strain>cv. Nipponbare</strain>
    </source>
</reference>
<reference key="7">
    <citation type="journal article" date="2011" name="J. Integr. Plant Biol.">
        <title>Rice homeobox transcription factor HOX1a positively regulates gibberellin responses by directly suppressing EL1.</title>
        <authorList>
            <person name="Wen B.Q."/>
            <person name="Xing M.Q."/>
            <person name="Zhang H."/>
            <person name="Dai C."/>
            <person name="Xue H.W."/>
        </authorList>
    </citation>
    <scope>FUNCTION</scope>
    <scope>SUBCELLULAR LOCATION</scope>
    <scope>TISSUE SPECIFICITY</scope>
    <scope>INDUCTION BY GIBBERELLIN</scope>
</reference>
<protein>
    <recommendedName>
        <fullName evidence="8">Homeobox protein HAZ1</fullName>
    </recommendedName>
    <alternativeName>
        <fullName evidence="8">Homeobox protein HOX1A homolog</fullName>
    </alternativeName>
</protein>
<comment type="function">
    <text evidence="5">Transcriptional repressor involved in the regulation of gibberrelin (GA) signaling. Binds to the 5'-GATC-3' motif of HD16/EL1 promoter. Functions as a positive regulator of GA signaling by suppressing the expression of HD16/EL1, a negative regulator of GA signaling.</text>
</comment>
<comment type="subcellular location">
    <subcellularLocation>
        <location evidence="5">Nucleus</location>
    </subcellularLocation>
</comment>
<comment type="tissue specificity">
    <text evidence="5">Expressed in roots, leaves, stems, panicle and seeds.</text>
</comment>
<comment type="developmental stage">
    <text evidence="4">Expressed in the outer layers of globular embryos.</text>
</comment>
<comment type="induction">
    <text evidence="5">Induced by gibberellin.</text>
</comment>
<comment type="miscellaneous">
    <text evidence="5">Plants over-expressing HAZ1 show increased length of the uppermost internode and panicle, due to enhanced gibberellin signaling.</text>
</comment>
<comment type="similarity">
    <text evidence="8">Belongs to the PHD-associated homeobox family.</text>
</comment>
<feature type="chain" id="PRO_0000437437" description="Homeobox protein HAZ1">
    <location>
        <begin position="1"/>
        <end position="792"/>
    </location>
</feature>
<feature type="zinc finger region" description="PHD-type" evidence="2">
    <location>
        <begin position="244"/>
        <end position="301"/>
    </location>
</feature>
<feature type="DNA-binding region" description="Homeobox" evidence="1">
    <location>
        <begin position="610"/>
        <end position="669"/>
    </location>
</feature>
<feature type="region of interest" description="Disordered" evidence="3">
    <location>
        <begin position="1"/>
        <end position="154"/>
    </location>
</feature>
<feature type="region of interest" description="Disordered" evidence="3">
    <location>
        <begin position="338"/>
        <end position="495"/>
    </location>
</feature>
<feature type="region of interest" description="Disordered" evidence="3">
    <location>
        <begin position="529"/>
        <end position="599"/>
    </location>
</feature>
<feature type="region of interest" description="Disordered" evidence="3">
    <location>
        <begin position="677"/>
        <end position="697"/>
    </location>
</feature>
<feature type="region of interest" description="Disordered" evidence="3">
    <location>
        <begin position="711"/>
        <end position="792"/>
    </location>
</feature>
<feature type="compositionally biased region" description="Polar residues" evidence="3">
    <location>
        <begin position="15"/>
        <end position="36"/>
    </location>
</feature>
<feature type="compositionally biased region" description="Basic residues" evidence="3">
    <location>
        <begin position="38"/>
        <end position="49"/>
    </location>
</feature>
<feature type="compositionally biased region" description="Polar residues" evidence="3">
    <location>
        <begin position="51"/>
        <end position="67"/>
    </location>
</feature>
<feature type="compositionally biased region" description="Basic residues" evidence="3">
    <location>
        <begin position="95"/>
        <end position="104"/>
    </location>
</feature>
<feature type="compositionally biased region" description="Basic and acidic residues" evidence="3">
    <location>
        <begin position="116"/>
        <end position="127"/>
    </location>
</feature>
<feature type="compositionally biased region" description="Acidic residues" evidence="3">
    <location>
        <begin position="345"/>
        <end position="354"/>
    </location>
</feature>
<feature type="compositionally biased region" description="Basic and acidic residues" evidence="3">
    <location>
        <begin position="362"/>
        <end position="371"/>
    </location>
</feature>
<feature type="compositionally biased region" description="Acidic residues" evidence="3">
    <location>
        <begin position="373"/>
        <end position="389"/>
    </location>
</feature>
<feature type="compositionally biased region" description="Acidic residues" evidence="3">
    <location>
        <begin position="433"/>
        <end position="453"/>
    </location>
</feature>
<feature type="compositionally biased region" description="Polar residues" evidence="3">
    <location>
        <begin position="716"/>
        <end position="737"/>
    </location>
</feature>
<feature type="compositionally biased region" description="Polar residues" evidence="3">
    <location>
        <begin position="746"/>
        <end position="760"/>
    </location>
</feature>
<feature type="compositionally biased region" description="Basic and acidic residues" evidence="3">
    <location>
        <begin position="774"/>
        <end position="792"/>
    </location>
</feature>
<sequence length="792" mass="87306">MDKTTTSDLVLDNDNIGSNAGSAQEPLTTNGKTSGVRNRYKQTVKRGRKGSQISPSKTYPLRSSHSNVRVLRSASKKKNETPIVPTNDNTAVQRVAKKRKRSKPLRPAPSRVLRSTSEKKNKAHNELLNDGAGVQPAEKKRKVGRPPKGGTPKDDYLMIRKRVRYVLNRMNYEQSLIQAYASEGWKGQSLEKIRPEKELERAKVEILRCKSRIREAFRNLDSLLSEGKLDESMFDSAGEISSEDIFCAACGSKDVTLKNDIILCDGICDRGFHQYCLNPPLLAEDIPQGDEGWLCPACDCKIDCIDVLNELQGVKLSIHDSWEKVFPEAASFLNGSKQIDASDLPSDDSADNDYDPTLAQGHKVDEEKSSGEDGGEGLDSDDSSSEDSESSEKEKSKTSQNGRTVDDLGLPSEDSEDGDFDPAGPDSDKEQNDESNSDQSDESDFTSDSDDFCAEIAKSCGQDEISGPSSSQIRTVDRTDGSGFDGEPNAENSNLAFMETELEQDMVLPISSKRQVERLDYKKLYNEAYGKASSDSSDDEEWYGNSTPEKGNLEDSETDSLAESPQGGKGFSRRAPVRYHNNEHTPQNVRPGGSVSDQQTEVLCSNSNGSTAKNRHFGPAINQKLKAHFKEDPYPSRATKENLAQELGLTFNQVTKWFSSTRHYARVAATKKENNIENHTAENNNNTNTVDSIQLRGSNDIVSVDRNDMVSEERTGQSNLNEGTPLRSDTSCGQSVAVTPMVHPENQGNDSSSNVRTPNAKSAEKLIPGLENSDEARRKAVQRELRKMKTGR</sequence>